<organism>
    <name type="scientific">Lactococcus lactis subsp. cremoris (strain MG1363)</name>
    <dbReference type="NCBI Taxonomy" id="416870"/>
    <lineage>
        <taxon>Bacteria</taxon>
        <taxon>Bacillati</taxon>
        <taxon>Bacillota</taxon>
        <taxon>Bacilli</taxon>
        <taxon>Lactobacillales</taxon>
        <taxon>Streptococcaceae</taxon>
        <taxon>Lactococcus</taxon>
        <taxon>Lactococcus cremoris subsp. cremoris</taxon>
    </lineage>
</organism>
<sequence length="380" mass="40938">MTSIKTKVIHGGISTDKTTGAVSVPIYQTSTYKQNGLGQPKEYEYSRSGNPTRHALEELIADLEGGVQGFAFSSGLAGIHAVLSLFSAGDHIILADDVYGGTFRLMDKVLTKTGIIYDLVDLSNLDDLKAAFKEETKAIYFETPSNPLLKVLDIKEISAIAKAHDALTLVDNTFATPYLQQPIALGADIVLHSATKYLGGHSDVVAGLVTTNSKELASEIGFLQNSIGAVLGPQDSWLVQRGIKTLALRMEAHSANAQKIAEFLETSKAVSKVYYPGLNSHPGHEIAKKQMSAFGGMISFELTDENAVKDFVENLSYFTLAESLGGVESLIEVPAVMTHASIPKELREEIGIKDGLIRLSVGVEAIEDLLTDIKEALEKK</sequence>
<protein>
    <recommendedName>
        <fullName>Cystathionine beta-lyase</fullName>
        <shortName>CBL</shortName>
        <ecNumber>4.4.1.13</ecNumber>
    </recommendedName>
    <alternativeName>
        <fullName>Beta-cystathionase</fullName>
    </alternativeName>
    <alternativeName>
        <fullName>Cysteine lyase</fullName>
    </alternativeName>
    <alternativeName>
        <fullName>Cysteine-S-conjugate beta-lyase</fullName>
    </alternativeName>
</protein>
<dbReference type="EC" id="4.4.1.13"/>
<dbReference type="EMBL" id="AF131880">
    <property type="protein sequence ID" value="AAF14693.1"/>
    <property type="molecule type" value="Genomic_DNA"/>
</dbReference>
<dbReference type="EMBL" id="AF170901">
    <property type="protein sequence ID" value="AAF36088.1"/>
    <property type="molecule type" value="Genomic_DNA"/>
</dbReference>
<dbReference type="EMBL" id="AM406671">
    <property type="protein sequence ID" value="CAL98348.1"/>
    <property type="molecule type" value="Genomic_DNA"/>
</dbReference>
<dbReference type="PIR" id="T47232">
    <property type="entry name" value="T47232"/>
</dbReference>
<dbReference type="RefSeq" id="WP_010905558.1">
    <property type="nucleotide sequence ID" value="NC_009004.1"/>
</dbReference>
<dbReference type="SMR" id="A2RM21"/>
<dbReference type="STRING" id="416870.llmg_1776"/>
<dbReference type="GeneID" id="89632914"/>
<dbReference type="KEGG" id="llm:llmg_1776"/>
<dbReference type="eggNOG" id="COG0626">
    <property type="taxonomic scope" value="Bacteria"/>
</dbReference>
<dbReference type="HOGENOM" id="CLU_018986_2_0_9"/>
<dbReference type="OrthoDB" id="9780685at2"/>
<dbReference type="PhylomeDB" id="A2RM21"/>
<dbReference type="BRENDA" id="4.4.1.1">
    <property type="organism ID" value="2903"/>
</dbReference>
<dbReference type="BRENDA" id="4.4.1.13">
    <property type="organism ID" value="2903"/>
</dbReference>
<dbReference type="UniPathway" id="UPA00051">
    <property type="reaction ID" value="UER00078"/>
</dbReference>
<dbReference type="Proteomes" id="UP000000364">
    <property type="component" value="Chromosome"/>
</dbReference>
<dbReference type="GO" id="GO:0005737">
    <property type="term" value="C:cytoplasm"/>
    <property type="evidence" value="ECO:0007669"/>
    <property type="project" value="UniProtKB-SubCell"/>
</dbReference>
<dbReference type="GO" id="GO:0004123">
    <property type="term" value="F:cystathionine gamma-lyase activity"/>
    <property type="evidence" value="ECO:0007669"/>
    <property type="project" value="TreeGrafter"/>
</dbReference>
<dbReference type="GO" id="GO:0003962">
    <property type="term" value="F:cystathionine gamma-synthase activity"/>
    <property type="evidence" value="ECO:0007669"/>
    <property type="project" value="TreeGrafter"/>
</dbReference>
<dbReference type="GO" id="GO:0047804">
    <property type="term" value="F:cysteine-S-conjugate beta-lyase activity"/>
    <property type="evidence" value="ECO:0007669"/>
    <property type="project" value="UniProtKB-EC"/>
</dbReference>
<dbReference type="GO" id="GO:0030170">
    <property type="term" value="F:pyridoxal phosphate binding"/>
    <property type="evidence" value="ECO:0007669"/>
    <property type="project" value="InterPro"/>
</dbReference>
<dbReference type="GO" id="GO:0019343">
    <property type="term" value="P:cysteine biosynthetic process via cystathionine"/>
    <property type="evidence" value="ECO:0007669"/>
    <property type="project" value="TreeGrafter"/>
</dbReference>
<dbReference type="GO" id="GO:0009086">
    <property type="term" value="P:methionine biosynthetic process"/>
    <property type="evidence" value="ECO:0007669"/>
    <property type="project" value="UniProtKB-KW"/>
</dbReference>
<dbReference type="GO" id="GO:0019346">
    <property type="term" value="P:transsulfuration"/>
    <property type="evidence" value="ECO:0007669"/>
    <property type="project" value="InterPro"/>
</dbReference>
<dbReference type="CDD" id="cd00614">
    <property type="entry name" value="CGS_like"/>
    <property type="match status" value="1"/>
</dbReference>
<dbReference type="FunFam" id="3.90.1150.10:FF:000008">
    <property type="entry name" value="Cystathionine gamma-synthase"/>
    <property type="match status" value="1"/>
</dbReference>
<dbReference type="FunFam" id="3.40.640.10:FF:000009">
    <property type="entry name" value="Cystathionine gamma-synthase homolog"/>
    <property type="match status" value="1"/>
</dbReference>
<dbReference type="Gene3D" id="3.90.1150.10">
    <property type="entry name" value="Aspartate Aminotransferase, domain 1"/>
    <property type="match status" value="1"/>
</dbReference>
<dbReference type="Gene3D" id="3.40.640.10">
    <property type="entry name" value="Type I PLP-dependent aspartate aminotransferase-like (Major domain)"/>
    <property type="match status" value="1"/>
</dbReference>
<dbReference type="InterPro" id="IPR000277">
    <property type="entry name" value="Cys/Met-Metab_PyrdxlP-dep_enz"/>
</dbReference>
<dbReference type="InterPro" id="IPR054542">
    <property type="entry name" value="Cys_met_metab_PP"/>
</dbReference>
<dbReference type="InterPro" id="IPR015424">
    <property type="entry name" value="PyrdxlP-dep_Trfase"/>
</dbReference>
<dbReference type="InterPro" id="IPR015421">
    <property type="entry name" value="PyrdxlP-dep_Trfase_major"/>
</dbReference>
<dbReference type="InterPro" id="IPR015422">
    <property type="entry name" value="PyrdxlP-dep_Trfase_small"/>
</dbReference>
<dbReference type="NCBIfam" id="NF004821">
    <property type="entry name" value="PRK06176.1"/>
    <property type="match status" value="1"/>
</dbReference>
<dbReference type="NCBIfam" id="NF005810">
    <property type="entry name" value="PRK07671.1"/>
    <property type="match status" value="1"/>
</dbReference>
<dbReference type="NCBIfam" id="NF005871">
    <property type="entry name" value="PRK07811.1"/>
    <property type="match status" value="1"/>
</dbReference>
<dbReference type="PANTHER" id="PTHR11808:SF15">
    <property type="entry name" value="CYSTATHIONINE GAMMA-LYASE"/>
    <property type="match status" value="1"/>
</dbReference>
<dbReference type="PANTHER" id="PTHR11808">
    <property type="entry name" value="TRANS-SULFURATION ENZYME FAMILY MEMBER"/>
    <property type="match status" value="1"/>
</dbReference>
<dbReference type="Pfam" id="PF01053">
    <property type="entry name" value="Cys_Met_Meta_PP"/>
    <property type="match status" value="1"/>
</dbReference>
<dbReference type="PIRSF" id="PIRSF001434">
    <property type="entry name" value="CGS"/>
    <property type="match status" value="1"/>
</dbReference>
<dbReference type="SUPFAM" id="SSF53383">
    <property type="entry name" value="PLP-dependent transferases"/>
    <property type="match status" value="1"/>
</dbReference>
<dbReference type="PROSITE" id="PS00868">
    <property type="entry name" value="CYS_MET_METAB_PP"/>
    <property type="match status" value="1"/>
</dbReference>
<proteinExistence type="evidence at protein level"/>
<gene>
    <name type="primary">metC</name>
    <name type="synonym">metB2</name>
    <name type="ordered locus">llmg_1776</name>
</gene>
<reference key="1">
    <citation type="journal article" date="2000" name="Appl. Environ. Microbiol.">
        <title>Molecular and functional analyses of the metC gene of Lactococcus lactis, encoding cystathionine beta-lyase.</title>
        <authorList>
            <person name="Fernandez M."/>
            <person name="van Doesburg W."/>
            <person name="Rutten G.A.M."/>
            <person name="Marugg J.D."/>
            <person name="Alting A.C."/>
            <person name="van Kranenburg R."/>
            <person name="Kuipers O.P."/>
        </authorList>
    </citation>
    <scope>NUCLEOTIDE SEQUENCE [GENOMIC DNA]</scope>
    <scope>CHARACTERIZATION</scope>
</reference>
<reference key="2">
    <citation type="journal article" date="2000" name="FEMS Microbiol. Lett.">
        <title>Identification and characterization of a cystathionine beta/gamma-lyase from Lactococcus lactis ssp. cremoris MG1363.</title>
        <authorList>
            <person name="Dobric N."/>
            <person name="Limsowtin G.K."/>
            <person name="Hillier A.J."/>
            <person name="Dudman N.P."/>
            <person name="Davidson B.E."/>
        </authorList>
    </citation>
    <scope>NUCLEOTIDE SEQUENCE [GENOMIC DNA]</scope>
    <scope>CHARACTERIZATION</scope>
</reference>
<reference key="3">
    <citation type="journal article" date="2007" name="J. Bacteriol.">
        <title>The complete genome sequence of the lactic acid bacterial paradigm Lactococcus lactis subsp. cremoris MG1363.</title>
        <authorList>
            <person name="Wegmann U."/>
            <person name="O'Connell-Motherway M."/>
            <person name="Zomer A."/>
            <person name="Buist G."/>
            <person name="Shearman C."/>
            <person name="Canchaya C."/>
            <person name="Ventura M."/>
            <person name="Goesmann A."/>
            <person name="Gasson M.J."/>
            <person name="Kuipers O.P."/>
            <person name="van Sinderen D."/>
            <person name="Kok J."/>
        </authorList>
    </citation>
    <scope>NUCLEOTIDE SEQUENCE [LARGE SCALE GENOMIC DNA]</scope>
    <source>
        <strain>MG1363</strain>
    </source>
</reference>
<keyword id="KW-0028">Amino-acid biosynthesis</keyword>
<keyword id="KW-0963">Cytoplasm</keyword>
<keyword id="KW-0456">Lyase</keyword>
<keyword id="KW-0486">Methionine biosynthesis</keyword>
<keyword id="KW-0663">Pyridoxal phosphate</keyword>
<evidence type="ECO:0000250" key="1"/>
<evidence type="ECO:0000305" key="2"/>
<accession>A2RM21</accession>
<accession>P0A4K3</accession>
<accession>Q9RAS7</accession>
<accession>Q9RAS9</accession>
<name>METC_LACLM</name>
<feature type="chain" id="PRO_0000285238" description="Cystathionine beta-lyase">
    <location>
        <begin position="1"/>
        <end position="380"/>
    </location>
</feature>
<feature type="modified residue" description="N6-(pyridoxal phosphate)lysine" evidence="1">
    <location>
        <position position="196"/>
    </location>
</feature>
<comment type="function">
    <text>The enzymatic degradation of amino acids in cheese is believed to generate aroma compounds and therefore to be essential for flavor development. Cystathionine beta-lyase (CBL) can convert cystathionine to homocysteine but is also able to catalyze an alpha, gamma elimination. With methionine as a substrate, it produces volatile sulfur compounds which are important for flavor formation in Gouda cheese.</text>
</comment>
<comment type="catalytic activity">
    <reaction>
        <text>L,L-cystathionine + H2O = L-homocysteine + pyruvate + NH4(+)</text>
        <dbReference type="Rhea" id="RHEA:13965"/>
        <dbReference type="ChEBI" id="CHEBI:15361"/>
        <dbReference type="ChEBI" id="CHEBI:15377"/>
        <dbReference type="ChEBI" id="CHEBI:28938"/>
        <dbReference type="ChEBI" id="CHEBI:58161"/>
        <dbReference type="ChEBI" id="CHEBI:58199"/>
    </reaction>
</comment>
<comment type="catalytic activity">
    <reaction>
        <text>an S-substituted L-cysteine + H2O = a thiol + pyruvate + NH4(+)</text>
        <dbReference type="Rhea" id="RHEA:18121"/>
        <dbReference type="ChEBI" id="CHEBI:15361"/>
        <dbReference type="ChEBI" id="CHEBI:15377"/>
        <dbReference type="ChEBI" id="CHEBI:28938"/>
        <dbReference type="ChEBI" id="CHEBI:29256"/>
        <dbReference type="ChEBI" id="CHEBI:58717"/>
        <dbReference type="EC" id="4.4.1.13"/>
    </reaction>
</comment>
<comment type="cofactor">
    <cofactor evidence="1">
        <name>pyridoxal 5'-phosphate</name>
        <dbReference type="ChEBI" id="CHEBI:597326"/>
    </cofactor>
</comment>
<comment type="pathway">
    <text>Amino-acid biosynthesis; L-methionine biosynthesis via de novo pathway; L-homocysteine from L-cystathionine: step 1/1.</text>
</comment>
<comment type="subcellular location">
    <subcellularLocation>
        <location>Cytoplasm</location>
    </subcellularLocation>
</comment>
<comment type="similarity">
    <text evidence="2">Belongs to the trans-sulfuration enzymes family.</text>
</comment>